<protein>
    <recommendedName>
        <fullName>Curli production assembly/transport component CsgF</fullName>
    </recommendedName>
</protein>
<reference key="1">
    <citation type="journal article" date="2002" name="Proc. Natl. Acad. Sci. U.S.A.">
        <title>Extensive mosaic structure revealed by the complete genome sequence of uropathogenic Escherichia coli.</title>
        <authorList>
            <person name="Welch R.A."/>
            <person name="Burland V."/>
            <person name="Plunkett G. III"/>
            <person name="Redford P."/>
            <person name="Roesch P."/>
            <person name="Rasko D."/>
            <person name="Buckles E.L."/>
            <person name="Liou S.-R."/>
            <person name="Boutin A."/>
            <person name="Hackett J."/>
            <person name="Stroud D."/>
            <person name="Mayhew G.F."/>
            <person name="Rose D.J."/>
            <person name="Zhou S."/>
            <person name="Schwartz D.C."/>
            <person name="Perna N.T."/>
            <person name="Mobley H.L.T."/>
            <person name="Donnenberg M.S."/>
            <person name="Blattner F.R."/>
        </authorList>
    </citation>
    <scope>NUCLEOTIDE SEQUENCE [LARGE SCALE GENOMIC DNA]</scope>
    <source>
        <strain>CFT073 / ATCC 700928 / UPEC</strain>
    </source>
</reference>
<sequence>MRVKHAVVLLMLISPLSWAGTMTFQFRNPNFGGNPNNGAFLLNSAQAQNSYKDPSYNDDFGIETPSALDNFTQAIQSQILGGLLSNINTGKPGRMVTNDYIVDIANRDGQLQLNVTDRKTGQTSTIQVSGLQNNSTDF</sequence>
<evidence type="ECO:0000250" key="1"/>
<evidence type="ECO:0000255" key="2"/>
<feature type="signal peptide" evidence="2">
    <location>
        <begin position="1"/>
        <end position="19"/>
    </location>
</feature>
<feature type="chain" id="PRO_0000043387" description="Curli production assembly/transport component CsgF">
    <location>
        <begin position="20"/>
        <end position="138"/>
    </location>
</feature>
<keyword id="KW-1185">Reference proteome</keyword>
<keyword id="KW-0732">Signal</keyword>
<dbReference type="EMBL" id="AE014075">
    <property type="protein sequence ID" value="AAN79773.1"/>
    <property type="molecule type" value="Genomic_DNA"/>
</dbReference>
<dbReference type="RefSeq" id="WP_001264088.1">
    <property type="nucleotide sequence ID" value="NZ_CP051263.1"/>
</dbReference>
<dbReference type="SMR" id="P0AE99"/>
<dbReference type="STRING" id="199310.c1300"/>
<dbReference type="GeneID" id="93776380"/>
<dbReference type="KEGG" id="ecc:c1300"/>
<dbReference type="eggNOG" id="ENOG5032U3R">
    <property type="taxonomic scope" value="Bacteria"/>
</dbReference>
<dbReference type="HOGENOM" id="CLU_136740_0_0_6"/>
<dbReference type="BioCyc" id="ECOL199310:C1300-MONOMER"/>
<dbReference type="Proteomes" id="UP000001410">
    <property type="component" value="Chromosome"/>
</dbReference>
<dbReference type="InterPro" id="IPR018893">
    <property type="entry name" value="T8SS_CsgF"/>
</dbReference>
<dbReference type="NCBIfam" id="NF007469">
    <property type="entry name" value="PRK10050.1"/>
    <property type="match status" value="1"/>
</dbReference>
<dbReference type="Pfam" id="PF10614">
    <property type="entry name" value="CsgF"/>
    <property type="match status" value="1"/>
</dbReference>
<comment type="function">
    <text evidence="1">May be involved in the biogenesis of curli organelles.</text>
</comment>
<accession>P0AE99</accession>
<accession>P52104</accession>
<organism>
    <name type="scientific">Escherichia coli O6:H1 (strain CFT073 / ATCC 700928 / UPEC)</name>
    <dbReference type="NCBI Taxonomy" id="199310"/>
    <lineage>
        <taxon>Bacteria</taxon>
        <taxon>Pseudomonadati</taxon>
        <taxon>Pseudomonadota</taxon>
        <taxon>Gammaproteobacteria</taxon>
        <taxon>Enterobacterales</taxon>
        <taxon>Enterobacteriaceae</taxon>
        <taxon>Escherichia</taxon>
    </lineage>
</organism>
<name>CSGF_ECOL6</name>
<gene>
    <name type="primary">csgF</name>
    <name type="ordered locus">c1300</name>
</gene>
<proteinExistence type="inferred from homology"/>